<protein>
    <recommendedName>
        <fullName evidence="1">Protein-arginine kinase</fullName>
        <ecNumber evidence="1">2.7.14.1</ecNumber>
    </recommendedName>
</protein>
<name>MCSB_STAAS</name>
<comment type="function">
    <text evidence="1">Catalyzes the specific phosphorylation of arginine residues in proteins.</text>
</comment>
<comment type="catalytic activity">
    <reaction evidence="1">
        <text>L-arginyl-[protein] + ATP = N(omega)-phospho-L-arginyl-[protein] + ADP + H(+)</text>
        <dbReference type="Rhea" id="RHEA:43384"/>
        <dbReference type="Rhea" id="RHEA-COMP:10532"/>
        <dbReference type="Rhea" id="RHEA-COMP:10533"/>
        <dbReference type="ChEBI" id="CHEBI:15378"/>
        <dbReference type="ChEBI" id="CHEBI:29965"/>
        <dbReference type="ChEBI" id="CHEBI:30616"/>
        <dbReference type="ChEBI" id="CHEBI:83226"/>
        <dbReference type="ChEBI" id="CHEBI:456216"/>
        <dbReference type="EC" id="2.7.14.1"/>
    </reaction>
</comment>
<comment type="similarity">
    <text evidence="1">Belongs to the ATP:guanido phosphotransferase family.</text>
</comment>
<sequence length="335" mass="38610">MTHNIHDNISQWMKSNEETPIVMSSRIRLARNLENHVHPLMYATENDGFRVINEVQDALPNFELMRLDQMDQQSKMKMVAKHLISPELIKQPAAAVLVNDDESLSVMINEEDHIRIQAMGTDTTLQALYNQASSIDDELDRSLDISYDEQLGYLTTCPTNIGTGMRASVMLHLPGLSIMKRMTRIAQTINRFGYTIRGIYGEGSQVYGHTYQVSNQLTLGKSELEIIETLTEVVNQIIHEEKQIRQKLDTYNQLETQDRVFRSLGILQNCRMITMEEASYRLSEVKLGIDLNYIELQNFKFNELMVAIQSPFLLDEEDDKSVKEKRADILREHIK</sequence>
<organism>
    <name type="scientific">Staphylococcus aureus (strain MSSA476)</name>
    <dbReference type="NCBI Taxonomy" id="282459"/>
    <lineage>
        <taxon>Bacteria</taxon>
        <taxon>Bacillati</taxon>
        <taxon>Bacillota</taxon>
        <taxon>Bacilli</taxon>
        <taxon>Bacillales</taxon>
        <taxon>Staphylococcaceae</taxon>
        <taxon>Staphylococcus</taxon>
    </lineage>
</organism>
<accession>Q6GBW4</accession>
<evidence type="ECO:0000255" key="1">
    <source>
        <dbReference type="HAMAP-Rule" id="MF_00602"/>
    </source>
</evidence>
<gene>
    <name evidence="1" type="primary">mcsB</name>
    <name type="ordered locus">SAS0481</name>
</gene>
<reference key="1">
    <citation type="journal article" date="2004" name="Proc. Natl. Acad. Sci. U.S.A.">
        <title>Complete genomes of two clinical Staphylococcus aureus strains: evidence for the rapid evolution of virulence and drug resistance.</title>
        <authorList>
            <person name="Holden M.T.G."/>
            <person name="Feil E.J."/>
            <person name="Lindsay J.A."/>
            <person name="Peacock S.J."/>
            <person name="Day N.P.J."/>
            <person name="Enright M.C."/>
            <person name="Foster T.J."/>
            <person name="Moore C.E."/>
            <person name="Hurst L."/>
            <person name="Atkin R."/>
            <person name="Barron A."/>
            <person name="Bason N."/>
            <person name="Bentley S.D."/>
            <person name="Chillingworth C."/>
            <person name="Chillingworth T."/>
            <person name="Churcher C."/>
            <person name="Clark L."/>
            <person name="Corton C."/>
            <person name="Cronin A."/>
            <person name="Doggett J."/>
            <person name="Dowd L."/>
            <person name="Feltwell T."/>
            <person name="Hance Z."/>
            <person name="Harris B."/>
            <person name="Hauser H."/>
            <person name="Holroyd S."/>
            <person name="Jagels K."/>
            <person name="James K.D."/>
            <person name="Lennard N."/>
            <person name="Line A."/>
            <person name="Mayes R."/>
            <person name="Moule S."/>
            <person name="Mungall K."/>
            <person name="Ormond D."/>
            <person name="Quail M.A."/>
            <person name="Rabbinowitsch E."/>
            <person name="Rutherford K.M."/>
            <person name="Sanders M."/>
            <person name="Sharp S."/>
            <person name="Simmonds M."/>
            <person name="Stevens K."/>
            <person name="Whitehead S."/>
            <person name="Barrell B.G."/>
            <person name="Spratt B.G."/>
            <person name="Parkhill J."/>
        </authorList>
    </citation>
    <scope>NUCLEOTIDE SEQUENCE [LARGE SCALE GENOMIC DNA]</scope>
    <source>
        <strain>MSSA476</strain>
    </source>
</reference>
<keyword id="KW-0067">ATP-binding</keyword>
<keyword id="KW-0418">Kinase</keyword>
<keyword id="KW-0547">Nucleotide-binding</keyword>
<keyword id="KW-0808">Transferase</keyword>
<dbReference type="EC" id="2.7.14.1" evidence="1"/>
<dbReference type="EMBL" id="BX571857">
    <property type="protein sequence ID" value="CAG42256.1"/>
    <property type="molecule type" value="Genomic_DNA"/>
</dbReference>
<dbReference type="RefSeq" id="WP_000149503.1">
    <property type="nucleotide sequence ID" value="NC_002953.3"/>
</dbReference>
<dbReference type="SMR" id="Q6GBW4"/>
<dbReference type="KEGG" id="sas:SAS0481"/>
<dbReference type="HOGENOM" id="CLU_066591_1_0_9"/>
<dbReference type="GO" id="GO:0005615">
    <property type="term" value="C:extracellular space"/>
    <property type="evidence" value="ECO:0007669"/>
    <property type="project" value="TreeGrafter"/>
</dbReference>
<dbReference type="GO" id="GO:0005524">
    <property type="term" value="F:ATP binding"/>
    <property type="evidence" value="ECO:0007669"/>
    <property type="project" value="UniProtKB-KW"/>
</dbReference>
<dbReference type="GO" id="GO:0004111">
    <property type="term" value="F:creatine kinase activity"/>
    <property type="evidence" value="ECO:0007669"/>
    <property type="project" value="InterPro"/>
</dbReference>
<dbReference type="GO" id="GO:0004672">
    <property type="term" value="F:protein kinase activity"/>
    <property type="evidence" value="ECO:0007669"/>
    <property type="project" value="UniProtKB-UniRule"/>
</dbReference>
<dbReference type="GO" id="GO:0046314">
    <property type="term" value="P:phosphocreatine biosynthetic process"/>
    <property type="evidence" value="ECO:0007669"/>
    <property type="project" value="InterPro"/>
</dbReference>
<dbReference type="CDD" id="cd07930">
    <property type="entry name" value="bacterial_phosphagen_kinase"/>
    <property type="match status" value="1"/>
</dbReference>
<dbReference type="FunFam" id="3.30.590.10:FF:000007">
    <property type="entry name" value="Protein-arginine kinase"/>
    <property type="match status" value="1"/>
</dbReference>
<dbReference type="Gene3D" id="3.30.590.10">
    <property type="entry name" value="Glutamine synthetase/guanido kinase, catalytic domain"/>
    <property type="match status" value="1"/>
</dbReference>
<dbReference type="HAMAP" id="MF_00602">
    <property type="entry name" value="Prot_Arg_kinase"/>
    <property type="match status" value="1"/>
</dbReference>
<dbReference type="InterPro" id="IPR023660">
    <property type="entry name" value="Arg_Kinase"/>
</dbReference>
<dbReference type="InterPro" id="IPR000749">
    <property type="entry name" value="ATP-guanido_PTrfase"/>
</dbReference>
<dbReference type="InterPro" id="IPR022415">
    <property type="entry name" value="ATP-guanido_PTrfase_AS"/>
</dbReference>
<dbReference type="InterPro" id="IPR022414">
    <property type="entry name" value="ATP-guanido_PTrfase_cat"/>
</dbReference>
<dbReference type="InterPro" id="IPR014746">
    <property type="entry name" value="Gln_synth/guanido_kin_cat_dom"/>
</dbReference>
<dbReference type="NCBIfam" id="NF002193">
    <property type="entry name" value="PRK01059.1-3"/>
    <property type="match status" value="1"/>
</dbReference>
<dbReference type="PANTHER" id="PTHR11547:SF38">
    <property type="entry name" value="ARGININE KINASE 1-RELATED"/>
    <property type="match status" value="1"/>
</dbReference>
<dbReference type="PANTHER" id="PTHR11547">
    <property type="entry name" value="ARGININE OR CREATINE KINASE"/>
    <property type="match status" value="1"/>
</dbReference>
<dbReference type="Pfam" id="PF00217">
    <property type="entry name" value="ATP-gua_Ptrans"/>
    <property type="match status" value="1"/>
</dbReference>
<dbReference type="SUPFAM" id="SSF55931">
    <property type="entry name" value="Glutamine synthetase/guanido kinase"/>
    <property type="match status" value="1"/>
</dbReference>
<dbReference type="PROSITE" id="PS00112">
    <property type="entry name" value="PHOSPHAGEN_KINASE"/>
    <property type="match status" value="1"/>
</dbReference>
<dbReference type="PROSITE" id="PS51510">
    <property type="entry name" value="PHOSPHAGEN_KINASE_C"/>
    <property type="match status" value="1"/>
</dbReference>
<feature type="chain" id="PRO_0000212032" description="Protein-arginine kinase">
    <location>
        <begin position="1"/>
        <end position="335"/>
    </location>
</feature>
<feature type="domain" description="Phosphagen kinase C-terminal" evidence="1">
    <location>
        <begin position="21"/>
        <end position="244"/>
    </location>
</feature>
<feature type="binding site" evidence="1">
    <location>
        <begin position="24"/>
        <end position="28"/>
    </location>
    <ligand>
        <name>ATP</name>
        <dbReference type="ChEBI" id="CHEBI:30616"/>
    </ligand>
</feature>
<feature type="binding site" evidence="1">
    <location>
        <position position="82"/>
    </location>
    <ligand>
        <name>ATP</name>
        <dbReference type="ChEBI" id="CHEBI:30616"/>
    </ligand>
</feature>
<feature type="binding site" evidence="1">
    <location>
        <position position="115"/>
    </location>
    <ligand>
        <name>ATP</name>
        <dbReference type="ChEBI" id="CHEBI:30616"/>
    </ligand>
</feature>
<feature type="binding site" evidence="1">
    <location>
        <begin position="166"/>
        <end position="170"/>
    </location>
    <ligand>
        <name>ATP</name>
        <dbReference type="ChEBI" id="CHEBI:30616"/>
    </ligand>
</feature>
<feature type="binding site" evidence="1">
    <location>
        <begin position="197"/>
        <end position="202"/>
    </location>
    <ligand>
        <name>ATP</name>
        <dbReference type="ChEBI" id="CHEBI:30616"/>
    </ligand>
</feature>
<proteinExistence type="inferred from homology"/>